<proteinExistence type="inferred from homology"/>
<protein>
    <recommendedName>
        <fullName>Esterase YqiA</fullName>
        <ecNumber>3.1.-.-</ecNumber>
    </recommendedName>
</protein>
<name>YQIA_ECOL6</name>
<comment type="function">
    <text evidence="1">Displays esterase activity toward palmitoyl-CoA and pNP-butyrate.</text>
</comment>
<sequence length="193" mass="21642">MSTLLYLHGFNSSPRSAKASLLKNWLAEHHPDVEMIIPQLPPYPSDAAELLESIVLEHGGDSLGIVGSSLGGYYATWLSQCFMLPAVVVNPAVRPFELLTDYLGQNENPYTGQQYVLESRHIYDLKVMQIDPLEAPDLIWLLQQTGDEVLDYRQAVAYYASCRQTVIEGGNHAFTGFEDYFNPIVDFLGLHHL</sequence>
<accession>P0A8Z8</accession>
<accession>P36653</accession>
<gene>
    <name type="primary">yqiA</name>
    <name type="ordered locus">c3777</name>
</gene>
<reference key="1">
    <citation type="journal article" date="2002" name="Proc. Natl. Acad. Sci. U.S.A.">
        <title>Extensive mosaic structure revealed by the complete genome sequence of uropathogenic Escherichia coli.</title>
        <authorList>
            <person name="Welch R.A."/>
            <person name="Burland V."/>
            <person name="Plunkett G. III"/>
            <person name="Redford P."/>
            <person name="Roesch P."/>
            <person name="Rasko D."/>
            <person name="Buckles E.L."/>
            <person name="Liou S.-R."/>
            <person name="Boutin A."/>
            <person name="Hackett J."/>
            <person name="Stroud D."/>
            <person name="Mayhew G.F."/>
            <person name="Rose D.J."/>
            <person name="Zhou S."/>
            <person name="Schwartz D.C."/>
            <person name="Perna N.T."/>
            <person name="Mobley H.L.T."/>
            <person name="Donnenberg M.S."/>
            <person name="Blattner F.R."/>
        </authorList>
    </citation>
    <scope>NUCLEOTIDE SEQUENCE [LARGE SCALE GENOMIC DNA]</scope>
    <source>
        <strain>CFT073 / ATCC 700928 / UPEC</strain>
    </source>
</reference>
<keyword id="KW-0378">Hydrolase</keyword>
<keyword id="KW-1185">Reference proteome</keyword>
<keyword id="KW-0719">Serine esterase</keyword>
<feature type="chain" id="PRO_0000066445" description="Esterase YqiA">
    <location>
        <begin position="1"/>
        <end position="193"/>
    </location>
</feature>
<evidence type="ECO:0000250" key="1"/>
<organism>
    <name type="scientific">Escherichia coli O6:H1 (strain CFT073 / ATCC 700928 / UPEC)</name>
    <dbReference type="NCBI Taxonomy" id="199310"/>
    <lineage>
        <taxon>Bacteria</taxon>
        <taxon>Pseudomonadati</taxon>
        <taxon>Pseudomonadota</taxon>
        <taxon>Gammaproteobacteria</taxon>
        <taxon>Enterobacterales</taxon>
        <taxon>Enterobacteriaceae</taxon>
        <taxon>Escherichia</taxon>
    </lineage>
</organism>
<dbReference type="EC" id="3.1.-.-"/>
<dbReference type="EMBL" id="AE014075">
    <property type="protein sequence ID" value="AAN82221.1"/>
    <property type="molecule type" value="Genomic_DNA"/>
</dbReference>
<dbReference type="RefSeq" id="WP_000105733.1">
    <property type="nucleotide sequence ID" value="NZ_CP051263.1"/>
</dbReference>
<dbReference type="SMR" id="P0A8Z8"/>
<dbReference type="STRING" id="199310.c3777"/>
<dbReference type="ESTHER" id="ecoli-yqia">
    <property type="family name" value="abh_upf00227"/>
</dbReference>
<dbReference type="GeneID" id="93778962"/>
<dbReference type="KEGG" id="ecc:c3777"/>
<dbReference type="eggNOG" id="COG3150">
    <property type="taxonomic scope" value="Bacteria"/>
</dbReference>
<dbReference type="HOGENOM" id="CLU_090996_2_0_6"/>
<dbReference type="BioCyc" id="ECOL199310:C3777-MONOMER"/>
<dbReference type="Proteomes" id="UP000001410">
    <property type="component" value="Chromosome"/>
</dbReference>
<dbReference type="GO" id="GO:0052689">
    <property type="term" value="F:carboxylic ester hydrolase activity"/>
    <property type="evidence" value="ECO:0007669"/>
    <property type="project" value="UniProtKB-KW"/>
</dbReference>
<dbReference type="FunFam" id="3.40.50.1820:FF:000027">
    <property type="entry name" value="Esterase YqiA"/>
    <property type="match status" value="1"/>
</dbReference>
<dbReference type="Gene3D" id="3.40.50.1820">
    <property type="entry name" value="alpha/beta hydrolase"/>
    <property type="match status" value="1"/>
</dbReference>
<dbReference type="InterPro" id="IPR029058">
    <property type="entry name" value="AB_hydrolase_fold"/>
</dbReference>
<dbReference type="InterPro" id="IPR008886">
    <property type="entry name" value="UPF0227/Esterase_YqiA"/>
</dbReference>
<dbReference type="NCBIfam" id="NF008291">
    <property type="entry name" value="PRK11071.1"/>
    <property type="match status" value="1"/>
</dbReference>
<dbReference type="PANTHER" id="PTHR35602:SF3">
    <property type="entry name" value="ESTERASE YQIA"/>
    <property type="match status" value="1"/>
</dbReference>
<dbReference type="PANTHER" id="PTHR35602">
    <property type="entry name" value="ESTERASE YQIA-RELATED"/>
    <property type="match status" value="1"/>
</dbReference>
<dbReference type="Pfam" id="PF05728">
    <property type="entry name" value="UPF0227"/>
    <property type="match status" value="1"/>
</dbReference>
<dbReference type="SUPFAM" id="SSF53474">
    <property type="entry name" value="alpha/beta-Hydrolases"/>
    <property type="match status" value="1"/>
</dbReference>